<gene>
    <name evidence="1" type="primary">fbiA</name>
    <name type="ORF">tch-ORF2</name>
</gene>
<keyword id="KW-0460">Magnesium</keyword>
<keyword id="KW-0808">Transferase</keyword>
<accession>Q75UN1</accession>
<name>FBIA_KITAU</name>
<evidence type="ECO:0000255" key="1">
    <source>
        <dbReference type="HAMAP-Rule" id="MF_01257"/>
    </source>
</evidence>
<evidence type="ECO:0000305" key="2"/>
<protein>
    <recommendedName>
        <fullName evidence="1">Phosphoenolpyruvate transferase</fullName>
        <ecNumber evidence="1">2.7.8.28</ecNumber>
    </recommendedName>
    <alternativeName>
        <fullName evidence="1">EPPG:FO PEP transferase</fullName>
    </alternativeName>
</protein>
<sequence length="321" mass="33660">MRIVALAGGIGGARFLRGLLAAVGPQDEITVIGNTGDDIHLYGLKVCPDLDTVMYTLGGGIHEEQGWGRADETWSIKAEMKEYGVGPEWFGLGDRDFATHLVRSQMLTAGYSLSQVTEALCVRWNPGVRLLPMSDDRVETHVRITDEQGTRAVHFQEYWVRLHAAVDAEAIIPVGADTAKPAPGVLEAIAEADVILFPPSNPVVSIGTILAVPGIREAVAAAPAPVVGLSPIIGGAPVRGMADKVLAAVGVEATAEAVALNYGPDLIDGWLVDTADEHAVAAVEAAGIACRAVPLLMTDVEATAEMARTALALAEQVRHGS</sequence>
<feature type="chain" id="PRO_0000145765" description="Phosphoenolpyruvate transferase">
    <location>
        <begin position="1"/>
        <end position="321"/>
    </location>
</feature>
<feature type="binding site" evidence="1">
    <location>
        <position position="51"/>
    </location>
    <ligand>
        <name>7,8-didemethyl-8-hydroxy-5-deazariboflavin</name>
        <dbReference type="ChEBI" id="CHEBI:59904"/>
    </ligand>
</feature>
<organism>
    <name type="scientific">Kitasatospora aureofaciens</name>
    <name type="common">Streptomyces aureofaciens</name>
    <dbReference type="NCBI Taxonomy" id="1894"/>
    <lineage>
        <taxon>Bacteria</taxon>
        <taxon>Bacillati</taxon>
        <taxon>Actinomycetota</taxon>
        <taxon>Actinomycetes</taxon>
        <taxon>Kitasatosporales</taxon>
        <taxon>Streptomycetaceae</taxon>
        <taxon>Kitasatospora</taxon>
    </lineage>
</organism>
<dbReference type="EC" id="2.7.8.28" evidence="1"/>
<dbReference type="EMBL" id="AB125899">
    <property type="protein sequence ID" value="BAD16616.1"/>
    <property type="status" value="ALT_INIT"/>
    <property type="molecule type" value="Genomic_DNA"/>
</dbReference>
<dbReference type="RefSeq" id="WP_030289941.1">
    <property type="nucleotide sequence ID" value="NZ_BMUB01000039.1"/>
</dbReference>
<dbReference type="SMR" id="Q75UN1"/>
<dbReference type="STRING" id="1894.ADK78_33440"/>
<dbReference type="GeneID" id="97490024"/>
<dbReference type="eggNOG" id="COG0391">
    <property type="taxonomic scope" value="Bacteria"/>
</dbReference>
<dbReference type="OrthoDB" id="7466225at2"/>
<dbReference type="UniPathway" id="UPA00071"/>
<dbReference type="GO" id="GO:0043743">
    <property type="term" value="F:LPPG:FO 2-phospho-L-lactate transferase activity"/>
    <property type="evidence" value="ECO:0007669"/>
    <property type="project" value="UniProtKB-EC"/>
</dbReference>
<dbReference type="GO" id="GO:0000287">
    <property type="term" value="F:magnesium ion binding"/>
    <property type="evidence" value="ECO:0007669"/>
    <property type="project" value="InterPro"/>
</dbReference>
<dbReference type="CDD" id="cd07186">
    <property type="entry name" value="CofD_like"/>
    <property type="match status" value="1"/>
</dbReference>
<dbReference type="FunFam" id="1.10.8.240:FF:000001">
    <property type="entry name" value="2-phospho-L-lactate transferase"/>
    <property type="match status" value="1"/>
</dbReference>
<dbReference type="FunFam" id="3.40.50.10680:FF:000001">
    <property type="entry name" value="2-phospho-L-lactate transferase"/>
    <property type="match status" value="1"/>
</dbReference>
<dbReference type="Gene3D" id="1.10.8.240">
    <property type="entry name" value="CofD-like domain"/>
    <property type="match status" value="1"/>
</dbReference>
<dbReference type="Gene3D" id="3.40.50.10680">
    <property type="entry name" value="CofD-like domains"/>
    <property type="match status" value="1"/>
</dbReference>
<dbReference type="HAMAP" id="MF_01257">
    <property type="entry name" value="CofD"/>
    <property type="match status" value="1"/>
</dbReference>
<dbReference type="InterPro" id="IPR002882">
    <property type="entry name" value="CofD"/>
</dbReference>
<dbReference type="InterPro" id="IPR038136">
    <property type="entry name" value="CofD-like_dom_sf"/>
</dbReference>
<dbReference type="InterPro" id="IPR010115">
    <property type="entry name" value="FbiA/CofD"/>
</dbReference>
<dbReference type="NCBIfam" id="TIGR01819">
    <property type="entry name" value="F420_cofD"/>
    <property type="match status" value="1"/>
</dbReference>
<dbReference type="PANTHER" id="PTHR43007">
    <property type="entry name" value="2-PHOSPHO-L-LACTATE TRANSFERASE"/>
    <property type="match status" value="1"/>
</dbReference>
<dbReference type="PANTHER" id="PTHR43007:SF1">
    <property type="entry name" value="2-PHOSPHO-L-LACTATE TRANSFERASE"/>
    <property type="match status" value="1"/>
</dbReference>
<dbReference type="Pfam" id="PF01933">
    <property type="entry name" value="CofD"/>
    <property type="match status" value="1"/>
</dbReference>
<dbReference type="SUPFAM" id="SSF142338">
    <property type="entry name" value="CofD-like"/>
    <property type="match status" value="1"/>
</dbReference>
<proteinExistence type="inferred from homology"/>
<reference key="1">
    <citation type="journal article" date="2004" name="Biosci. Biotechnol. Biochem.">
        <title>Identification and cloning of the gene involved in the final step of chlortetracycline biosynthesis in Streptomyces aureofaciens.</title>
        <authorList>
            <person name="Nakano T."/>
            <person name="Miyake K."/>
            <person name="Endo H."/>
            <person name="Dairi T."/>
            <person name="Mizukami T."/>
            <person name="Katsumata R."/>
        </authorList>
    </citation>
    <scope>NUCLEOTIDE SEQUENCE [GENOMIC DNA]</scope>
    <source>
        <strain>HP77</strain>
    </source>
</reference>
<comment type="function">
    <text evidence="1">Catalyzes the transfer of the phosphoenolpyruvate moiety from enoylpyruvoyl-2-diphospho-5'-guanosine (EPPG) to 7,8-didemethyl-8-hydroxy-5-deazariboflavin (FO) with the formation of dehydro coenzyme F420-0 and GMP.</text>
</comment>
<comment type="catalytic activity">
    <reaction evidence="1">
        <text>enolpyruvoyl-2-diphospho-5'-guanosine + 7,8-didemethyl-8-hydroxy-5-deazariboflavin = dehydro coenzyme F420-0 + GMP + H(+)</text>
        <dbReference type="Rhea" id="RHEA:27510"/>
        <dbReference type="ChEBI" id="CHEBI:15378"/>
        <dbReference type="ChEBI" id="CHEBI:58115"/>
        <dbReference type="ChEBI" id="CHEBI:59904"/>
        <dbReference type="ChEBI" id="CHEBI:143701"/>
        <dbReference type="ChEBI" id="CHEBI:143705"/>
        <dbReference type="EC" id="2.7.8.28"/>
    </reaction>
</comment>
<comment type="cofactor">
    <cofactor evidence="1">
        <name>Mg(2+)</name>
        <dbReference type="ChEBI" id="CHEBI:18420"/>
    </cofactor>
</comment>
<comment type="pathway">
    <text evidence="1">Cofactor biosynthesis; coenzyme F420 biosynthesis.</text>
</comment>
<comment type="subunit">
    <text evidence="1">Homodimer.</text>
</comment>
<comment type="similarity">
    <text evidence="1">Belongs to the CofD family.</text>
</comment>
<comment type="sequence caution" evidence="2">
    <conflict type="erroneous initiation">
        <sequence resource="EMBL-CDS" id="BAD16616"/>
    </conflict>
</comment>